<reference key="1">
    <citation type="journal article" date="2008" name="Appl. Environ. Microbiol.">
        <title>The genome of Polaromonas sp. strain JS666: insights into the evolution of a hydrocarbon- and xenobiotic-degrading bacterium, and features of relevance to biotechnology.</title>
        <authorList>
            <person name="Mattes T.E."/>
            <person name="Alexander A.K."/>
            <person name="Richardson P.M."/>
            <person name="Munk A.C."/>
            <person name="Han C.S."/>
            <person name="Stothard P."/>
            <person name="Coleman N.V."/>
        </authorList>
    </citation>
    <scope>NUCLEOTIDE SEQUENCE [LARGE SCALE GENOMIC DNA]</scope>
    <source>
        <strain>JS666 / ATCC BAA-500</strain>
    </source>
</reference>
<comment type="function">
    <text evidence="1">Catalyzes the isomerization between 2-isopropylmalate and 3-isopropylmalate, via the formation of 2-isopropylmaleate.</text>
</comment>
<comment type="catalytic activity">
    <reaction evidence="1">
        <text>(2R,3S)-3-isopropylmalate = (2S)-2-isopropylmalate</text>
        <dbReference type="Rhea" id="RHEA:32287"/>
        <dbReference type="ChEBI" id="CHEBI:1178"/>
        <dbReference type="ChEBI" id="CHEBI:35121"/>
        <dbReference type="EC" id="4.2.1.33"/>
    </reaction>
</comment>
<comment type="cofactor">
    <cofactor evidence="1">
        <name>[4Fe-4S] cluster</name>
        <dbReference type="ChEBI" id="CHEBI:49883"/>
    </cofactor>
    <text evidence="1">Binds 1 [4Fe-4S] cluster per subunit.</text>
</comment>
<comment type="pathway">
    <text evidence="1">Amino-acid biosynthesis; L-leucine biosynthesis; L-leucine from 3-methyl-2-oxobutanoate: step 2/4.</text>
</comment>
<comment type="subunit">
    <text evidence="1">Heterodimer of LeuC and LeuD.</text>
</comment>
<comment type="similarity">
    <text evidence="1">Belongs to the aconitase/IPM isomerase family. LeuC type 1 subfamily.</text>
</comment>
<name>LEUC_POLSJ</name>
<feature type="chain" id="PRO_1000063581" description="3-isopropylmalate dehydratase large subunit">
    <location>
        <begin position="1"/>
        <end position="473"/>
    </location>
</feature>
<feature type="binding site" evidence="1">
    <location>
        <position position="351"/>
    </location>
    <ligand>
        <name>[4Fe-4S] cluster</name>
        <dbReference type="ChEBI" id="CHEBI:49883"/>
    </ligand>
</feature>
<feature type="binding site" evidence="1">
    <location>
        <position position="414"/>
    </location>
    <ligand>
        <name>[4Fe-4S] cluster</name>
        <dbReference type="ChEBI" id="CHEBI:49883"/>
    </ligand>
</feature>
<feature type="binding site" evidence="1">
    <location>
        <position position="417"/>
    </location>
    <ligand>
        <name>[4Fe-4S] cluster</name>
        <dbReference type="ChEBI" id="CHEBI:49883"/>
    </ligand>
</feature>
<dbReference type="EC" id="4.2.1.33" evidence="1"/>
<dbReference type="EMBL" id="CP000316">
    <property type="protein sequence ID" value="ABE45513.1"/>
    <property type="molecule type" value="Genomic_DNA"/>
</dbReference>
<dbReference type="RefSeq" id="WP_011484507.1">
    <property type="nucleotide sequence ID" value="NC_007948.1"/>
</dbReference>
<dbReference type="SMR" id="Q126M9"/>
<dbReference type="STRING" id="296591.Bpro_3608"/>
<dbReference type="KEGG" id="pol:Bpro_3608"/>
<dbReference type="eggNOG" id="COG0065">
    <property type="taxonomic scope" value="Bacteria"/>
</dbReference>
<dbReference type="HOGENOM" id="CLU_006714_3_4_4"/>
<dbReference type="OrthoDB" id="9802769at2"/>
<dbReference type="UniPathway" id="UPA00048">
    <property type="reaction ID" value="UER00071"/>
</dbReference>
<dbReference type="Proteomes" id="UP000001983">
    <property type="component" value="Chromosome"/>
</dbReference>
<dbReference type="GO" id="GO:0003861">
    <property type="term" value="F:3-isopropylmalate dehydratase activity"/>
    <property type="evidence" value="ECO:0007669"/>
    <property type="project" value="UniProtKB-UniRule"/>
</dbReference>
<dbReference type="GO" id="GO:0051539">
    <property type="term" value="F:4 iron, 4 sulfur cluster binding"/>
    <property type="evidence" value="ECO:0007669"/>
    <property type="project" value="UniProtKB-KW"/>
</dbReference>
<dbReference type="GO" id="GO:0046872">
    <property type="term" value="F:metal ion binding"/>
    <property type="evidence" value="ECO:0007669"/>
    <property type="project" value="UniProtKB-KW"/>
</dbReference>
<dbReference type="GO" id="GO:0009098">
    <property type="term" value="P:L-leucine biosynthetic process"/>
    <property type="evidence" value="ECO:0007669"/>
    <property type="project" value="UniProtKB-UniRule"/>
</dbReference>
<dbReference type="CDD" id="cd01583">
    <property type="entry name" value="IPMI"/>
    <property type="match status" value="1"/>
</dbReference>
<dbReference type="FunFam" id="3.30.499.10:FF:000007">
    <property type="entry name" value="3-isopropylmalate dehydratase large subunit"/>
    <property type="match status" value="1"/>
</dbReference>
<dbReference type="Gene3D" id="3.30.499.10">
    <property type="entry name" value="Aconitase, domain 3"/>
    <property type="match status" value="2"/>
</dbReference>
<dbReference type="HAMAP" id="MF_01026">
    <property type="entry name" value="LeuC_type1"/>
    <property type="match status" value="1"/>
</dbReference>
<dbReference type="InterPro" id="IPR004430">
    <property type="entry name" value="3-IsopropMal_deHydase_lsu"/>
</dbReference>
<dbReference type="InterPro" id="IPR015931">
    <property type="entry name" value="Acnase/IPM_dHydase_lsu_aba_1/3"/>
</dbReference>
<dbReference type="InterPro" id="IPR001030">
    <property type="entry name" value="Acoase/IPM_deHydtase_lsu_aba"/>
</dbReference>
<dbReference type="InterPro" id="IPR018136">
    <property type="entry name" value="Aconitase_4Fe-4S_BS"/>
</dbReference>
<dbReference type="InterPro" id="IPR036008">
    <property type="entry name" value="Aconitase_4Fe-4S_dom"/>
</dbReference>
<dbReference type="InterPro" id="IPR050067">
    <property type="entry name" value="IPM_dehydratase_rel_enz"/>
</dbReference>
<dbReference type="InterPro" id="IPR033941">
    <property type="entry name" value="IPMI_cat"/>
</dbReference>
<dbReference type="NCBIfam" id="TIGR00170">
    <property type="entry name" value="leuC"/>
    <property type="match status" value="1"/>
</dbReference>
<dbReference type="NCBIfam" id="NF004016">
    <property type="entry name" value="PRK05478.1"/>
    <property type="match status" value="1"/>
</dbReference>
<dbReference type="NCBIfam" id="NF009116">
    <property type="entry name" value="PRK12466.1"/>
    <property type="match status" value="1"/>
</dbReference>
<dbReference type="PANTHER" id="PTHR43822:SF9">
    <property type="entry name" value="3-ISOPROPYLMALATE DEHYDRATASE"/>
    <property type="match status" value="1"/>
</dbReference>
<dbReference type="PANTHER" id="PTHR43822">
    <property type="entry name" value="HOMOACONITASE, MITOCHONDRIAL-RELATED"/>
    <property type="match status" value="1"/>
</dbReference>
<dbReference type="Pfam" id="PF00330">
    <property type="entry name" value="Aconitase"/>
    <property type="match status" value="1"/>
</dbReference>
<dbReference type="PRINTS" id="PR00415">
    <property type="entry name" value="ACONITASE"/>
</dbReference>
<dbReference type="SUPFAM" id="SSF53732">
    <property type="entry name" value="Aconitase iron-sulfur domain"/>
    <property type="match status" value="1"/>
</dbReference>
<dbReference type="PROSITE" id="PS00450">
    <property type="entry name" value="ACONITASE_1"/>
    <property type="match status" value="1"/>
</dbReference>
<dbReference type="PROSITE" id="PS01244">
    <property type="entry name" value="ACONITASE_2"/>
    <property type="match status" value="1"/>
</dbReference>
<evidence type="ECO:0000255" key="1">
    <source>
        <dbReference type="HAMAP-Rule" id="MF_01026"/>
    </source>
</evidence>
<sequence>MGRTLYDKIWDEHVVHTEEDGTSILYIDRHLVHEVTSPQAFEGLREAGRKVWRISSIVATADHNTPTTGWELGYDGITDLVSKEQITTLDANIKEFGAAAFFPFLSKRQGIVHVIGPESGATLPGMTVVCGDSHTSTHGAFGALAHGIGTSEVEHVMATQTLLAKKAKNLLIKVEGTLPKGCTAKDIVLAIIGKIGTAGGTGYTIEFAGSAIRALSMEGRMTVCNMAIEGGARAGLVAVDQKTIDYVKGRLLAPTGVEWDQAVQYWATLHSDADAKFDAVVELDASQILPQVTWGTSPEMVLSIEDRVPDPDKEKDANKRGAIERALTYMGLQPGKALNDLYVDKVFIGSCTNSRIEDMREAAAIVKKLGQKVAKNVKLAMVVPGSGLVKEQAEREGLDKIFVAAGFEWREPGCSMCLAMNADRLEPGERCASTSNRNFEGRQGAGGRTHLVSPAMAAAAAVHGHFVDVRKFV</sequence>
<keyword id="KW-0004">4Fe-4S</keyword>
<keyword id="KW-0028">Amino-acid biosynthesis</keyword>
<keyword id="KW-0100">Branched-chain amino acid biosynthesis</keyword>
<keyword id="KW-0408">Iron</keyword>
<keyword id="KW-0411">Iron-sulfur</keyword>
<keyword id="KW-0432">Leucine biosynthesis</keyword>
<keyword id="KW-0456">Lyase</keyword>
<keyword id="KW-0479">Metal-binding</keyword>
<keyword id="KW-1185">Reference proteome</keyword>
<organism>
    <name type="scientific">Polaromonas sp. (strain JS666 / ATCC BAA-500)</name>
    <dbReference type="NCBI Taxonomy" id="296591"/>
    <lineage>
        <taxon>Bacteria</taxon>
        <taxon>Pseudomonadati</taxon>
        <taxon>Pseudomonadota</taxon>
        <taxon>Betaproteobacteria</taxon>
        <taxon>Burkholderiales</taxon>
        <taxon>Comamonadaceae</taxon>
        <taxon>Polaromonas</taxon>
    </lineage>
</organism>
<gene>
    <name evidence="1" type="primary">leuC</name>
    <name type="ordered locus">Bpro_3608</name>
</gene>
<protein>
    <recommendedName>
        <fullName evidence="1">3-isopropylmalate dehydratase large subunit</fullName>
        <ecNumber evidence="1">4.2.1.33</ecNumber>
    </recommendedName>
    <alternativeName>
        <fullName evidence="1">Alpha-IPM isomerase</fullName>
        <shortName evidence="1">IPMI</shortName>
    </alternativeName>
    <alternativeName>
        <fullName evidence="1">Isopropylmalate isomerase</fullName>
    </alternativeName>
</protein>
<proteinExistence type="inferred from homology"/>
<accession>Q126M9</accession>